<sequence length="194" mass="21979">MKQKRPKYMQIIDAAVEVIAENGYHQSQVSKIAKQAGVADGTIYLYFKNKEDILISLFKEKMGQFIERMEEDIKEKATAKEKLALVISKHFSLLAGDHNLAIVTQLELRQSNLELRQKINEILKGYLNILDGILTEGIQSGEIKEGLDVRLARQMIFGTIDETVTTWVMNDQKYDLVALSNSVLELLVSGIHNK</sequence>
<protein>
    <recommendedName>
        <fullName>Fatty acid metabolism regulator protein</fullName>
    </recommendedName>
</protein>
<name>FADR_BACSU</name>
<proteinExistence type="evidence at protein level"/>
<keyword id="KW-0002">3D-structure</keyword>
<keyword id="KW-0963">Cytoplasm</keyword>
<keyword id="KW-0238">DNA-binding</keyword>
<keyword id="KW-0276">Fatty acid metabolism</keyword>
<keyword id="KW-0442">Lipid degradation</keyword>
<keyword id="KW-0443">Lipid metabolism</keyword>
<keyword id="KW-1185">Reference proteome</keyword>
<keyword id="KW-0678">Repressor</keyword>
<keyword id="KW-0804">Transcription</keyword>
<keyword id="KW-0805">Transcription regulation</keyword>
<dbReference type="EMBL" id="Z75208">
    <property type="protein sequence ID" value="CAA99572.1"/>
    <property type="molecule type" value="Genomic_DNA"/>
</dbReference>
<dbReference type="EMBL" id="AL009126">
    <property type="protein sequence ID" value="CAB14815.1"/>
    <property type="molecule type" value="Genomic_DNA"/>
</dbReference>
<dbReference type="PIR" id="F69985">
    <property type="entry name" value="F69985"/>
</dbReference>
<dbReference type="RefSeq" id="NP_390733.1">
    <property type="nucleotide sequence ID" value="NC_000964.3"/>
</dbReference>
<dbReference type="RefSeq" id="WP_003229547.1">
    <property type="nucleotide sequence ID" value="NZ_OZ025638.1"/>
</dbReference>
<dbReference type="PDB" id="1VI0">
    <property type="method" value="X-ray"/>
    <property type="resolution" value="1.65 A"/>
    <property type="chains" value="A/B=2-194"/>
</dbReference>
<dbReference type="PDB" id="3WHB">
    <property type="method" value="X-ray"/>
    <property type="resolution" value="2.15 A"/>
    <property type="chains" value="A/B=1-194"/>
</dbReference>
<dbReference type="PDB" id="3WHC">
    <property type="method" value="X-ray"/>
    <property type="resolution" value="2.20 A"/>
    <property type="chains" value="A/B/C/D/E/F=1-194"/>
</dbReference>
<dbReference type="PDBsum" id="1VI0"/>
<dbReference type="PDBsum" id="3WHB"/>
<dbReference type="PDBsum" id="3WHC"/>
<dbReference type="SMR" id="P94548"/>
<dbReference type="FunCoup" id="P94548">
    <property type="interactions" value="144"/>
</dbReference>
<dbReference type="STRING" id="224308.BSU28550"/>
<dbReference type="DrugBank" id="DB03264">
    <property type="generic name" value="Dodecyl-Coa"/>
</dbReference>
<dbReference type="jPOST" id="P94548"/>
<dbReference type="PaxDb" id="224308-BSU28550"/>
<dbReference type="EnsemblBacteria" id="CAB14815">
    <property type="protein sequence ID" value="CAB14815"/>
    <property type="gene ID" value="BSU_28550"/>
</dbReference>
<dbReference type="GeneID" id="938105"/>
<dbReference type="KEGG" id="bsu:BSU28550"/>
<dbReference type="PATRIC" id="fig|224308.179.peg.3102"/>
<dbReference type="eggNOG" id="COG1309">
    <property type="taxonomic scope" value="Bacteria"/>
</dbReference>
<dbReference type="InParanoid" id="P94548"/>
<dbReference type="OrthoDB" id="9809994at2"/>
<dbReference type="PhylomeDB" id="P94548"/>
<dbReference type="BioCyc" id="BSUB:BSU28550-MONOMER"/>
<dbReference type="EvolutionaryTrace" id="P94548"/>
<dbReference type="Proteomes" id="UP000001570">
    <property type="component" value="Chromosome"/>
</dbReference>
<dbReference type="GO" id="GO:0005737">
    <property type="term" value="C:cytoplasm"/>
    <property type="evidence" value="ECO:0007669"/>
    <property type="project" value="UniProtKB-SubCell"/>
</dbReference>
<dbReference type="GO" id="GO:0003700">
    <property type="term" value="F:DNA-binding transcription factor activity"/>
    <property type="evidence" value="ECO:0000318"/>
    <property type="project" value="GO_Central"/>
</dbReference>
<dbReference type="GO" id="GO:0000976">
    <property type="term" value="F:transcription cis-regulatory region binding"/>
    <property type="evidence" value="ECO:0000318"/>
    <property type="project" value="GO_Central"/>
</dbReference>
<dbReference type="GO" id="GO:0006631">
    <property type="term" value="P:fatty acid metabolic process"/>
    <property type="evidence" value="ECO:0007669"/>
    <property type="project" value="UniProtKB-KW"/>
</dbReference>
<dbReference type="GO" id="GO:0016042">
    <property type="term" value="P:lipid catabolic process"/>
    <property type="evidence" value="ECO:0007669"/>
    <property type="project" value="UniProtKB-KW"/>
</dbReference>
<dbReference type="GO" id="GO:0006355">
    <property type="term" value="P:regulation of DNA-templated transcription"/>
    <property type="evidence" value="ECO:0000318"/>
    <property type="project" value="GO_Central"/>
</dbReference>
<dbReference type="Gene3D" id="1.10.10.60">
    <property type="entry name" value="Homeodomain-like"/>
    <property type="match status" value="1"/>
</dbReference>
<dbReference type="Gene3D" id="1.10.357.10">
    <property type="entry name" value="Tetracycline Repressor, domain 2"/>
    <property type="match status" value="1"/>
</dbReference>
<dbReference type="InterPro" id="IPR009057">
    <property type="entry name" value="Homeodomain-like_sf"/>
</dbReference>
<dbReference type="InterPro" id="IPR050624">
    <property type="entry name" value="HTH-type_Tx_Regulator"/>
</dbReference>
<dbReference type="InterPro" id="IPR001647">
    <property type="entry name" value="HTH_TetR"/>
</dbReference>
<dbReference type="InterPro" id="IPR036271">
    <property type="entry name" value="Tet_transcr_reg_TetR-rel_C_sf"/>
</dbReference>
<dbReference type="InterPro" id="IPR013570">
    <property type="entry name" value="Tscrpt_reg_YsiA_C"/>
</dbReference>
<dbReference type="PANTHER" id="PTHR43479">
    <property type="entry name" value="ACREF/ENVCD OPERON REPRESSOR-RELATED"/>
    <property type="match status" value="1"/>
</dbReference>
<dbReference type="PANTHER" id="PTHR43479:SF11">
    <property type="entry name" value="ACREF_ENVCD OPERON REPRESSOR-RELATED"/>
    <property type="match status" value="1"/>
</dbReference>
<dbReference type="Pfam" id="PF08359">
    <property type="entry name" value="TetR_C_4"/>
    <property type="match status" value="1"/>
</dbReference>
<dbReference type="Pfam" id="PF00440">
    <property type="entry name" value="TetR_N"/>
    <property type="match status" value="1"/>
</dbReference>
<dbReference type="PRINTS" id="PR00455">
    <property type="entry name" value="HTHTETR"/>
</dbReference>
<dbReference type="SUPFAM" id="SSF46689">
    <property type="entry name" value="Homeodomain-like"/>
    <property type="match status" value="1"/>
</dbReference>
<dbReference type="SUPFAM" id="SSF48498">
    <property type="entry name" value="Tetracyclin repressor-like, C-terminal domain"/>
    <property type="match status" value="1"/>
</dbReference>
<dbReference type="PROSITE" id="PS50977">
    <property type="entry name" value="HTH_TETR_2"/>
    <property type="match status" value="1"/>
</dbReference>
<evidence type="ECO:0000255" key="1">
    <source>
        <dbReference type="PROSITE-ProRule" id="PRU00335"/>
    </source>
</evidence>
<evidence type="ECO:0000269" key="2">
    <source>
    </source>
</evidence>
<evidence type="ECO:0000305" key="3"/>
<evidence type="ECO:0007829" key="4">
    <source>
        <dbReference type="PDB" id="1VI0"/>
    </source>
</evidence>
<evidence type="ECO:0007829" key="5">
    <source>
        <dbReference type="PDB" id="3WHC"/>
    </source>
</evidence>
<reference key="1">
    <citation type="journal article" date="1996" name="Microbiology">
        <title>The dnaB-pheA (256 degrees-240 degrees) region of the Bacillus subtilis chromosome containing genes responsible for stress responses, the utilization of plant cell walls and primary metabolism.</title>
        <authorList>
            <person name="Wipat A."/>
            <person name="Carter N."/>
            <person name="Brignell C.S."/>
            <person name="Guy J.B."/>
            <person name="Piper K."/>
            <person name="Sanders J."/>
            <person name="Emmerson P.T."/>
            <person name="Harwood C.R."/>
        </authorList>
    </citation>
    <scope>NUCLEOTIDE SEQUENCE [GENOMIC DNA]</scope>
    <source>
        <strain>168</strain>
    </source>
</reference>
<reference key="2">
    <citation type="journal article" date="1997" name="Nature">
        <title>The complete genome sequence of the Gram-positive bacterium Bacillus subtilis.</title>
        <authorList>
            <person name="Kunst F."/>
            <person name="Ogasawara N."/>
            <person name="Moszer I."/>
            <person name="Albertini A.M."/>
            <person name="Alloni G."/>
            <person name="Azevedo V."/>
            <person name="Bertero M.G."/>
            <person name="Bessieres P."/>
            <person name="Bolotin A."/>
            <person name="Borchert S."/>
            <person name="Borriss R."/>
            <person name="Boursier L."/>
            <person name="Brans A."/>
            <person name="Braun M."/>
            <person name="Brignell S.C."/>
            <person name="Bron S."/>
            <person name="Brouillet S."/>
            <person name="Bruschi C.V."/>
            <person name="Caldwell B."/>
            <person name="Capuano V."/>
            <person name="Carter N.M."/>
            <person name="Choi S.-K."/>
            <person name="Codani J.-J."/>
            <person name="Connerton I.F."/>
            <person name="Cummings N.J."/>
            <person name="Daniel R.A."/>
            <person name="Denizot F."/>
            <person name="Devine K.M."/>
            <person name="Duesterhoeft A."/>
            <person name="Ehrlich S.D."/>
            <person name="Emmerson P.T."/>
            <person name="Entian K.-D."/>
            <person name="Errington J."/>
            <person name="Fabret C."/>
            <person name="Ferrari E."/>
            <person name="Foulger D."/>
            <person name="Fritz C."/>
            <person name="Fujita M."/>
            <person name="Fujita Y."/>
            <person name="Fuma S."/>
            <person name="Galizzi A."/>
            <person name="Galleron N."/>
            <person name="Ghim S.-Y."/>
            <person name="Glaser P."/>
            <person name="Goffeau A."/>
            <person name="Golightly E.J."/>
            <person name="Grandi G."/>
            <person name="Guiseppi G."/>
            <person name="Guy B.J."/>
            <person name="Haga K."/>
            <person name="Haiech J."/>
            <person name="Harwood C.R."/>
            <person name="Henaut A."/>
            <person name="Hilbert H."/>
            <person name="Holsappel S."/>
            <person name="Hosono S."/>
            <person name="Hullo M.-F."/>
            <person name="Itaya M."/>
            <person name="Jones L.-M."/>
            <person name="Joris B."/>
            <person name="Karamata D."/>
            <person name="Kasahara Y."/>
            <person name="Klaerr-Blanchard M."/>
            <person name="Klein C."/>
            <person name="Kobayashi Y."/>
            <person name="Koetter P."/>
            <person name="Koningstein G."/>
            <person name="Krogh S."/>
            <person name="Kumano M."/>
            <person name="Kurita K."/>
            <person name="Lapidus A."/>
            <person name="Lardinois S."/>
            <person name="Lauber J."/>
            <person name="Lazarevic V."/>
            <person name="Lee S.-M."/>
            <person name="Levine A."/>
            <person name="Liu H."/>
            <person name="Masuda S."/>
            <person name="Mauel C."/>
            <person name="Medigue C."/>
            <person name="Medina N."/>
            <person name="Mellado R.P."/>
            <person name="Mizuno M."/>
            <person name="Moestl D."/>
            <person name="Nakai S."/>
            <person name="Noback M."/>
            <person name="Noone D."/>
            <person name="O'Reilly M."/>
            <person name="Ogawa K."/>
            <person name="Ogiwara A."/>
            <person name="Oudega B."/>
            <person name="Park S.-H."/>
            <person name="Parro V."/>
            <person name="Pohl T.M."/>
            <person name="Portetelle D."/>
            <person name="Porwollik S."/>
            <person name="Prescott A.M."/>
            <person name="Presecan E."/>
            <person name="Pujic P."/>
            <person name="Purnelle B."/>
            <person name="Rapoport G."/>
            <person name="Rey M."/>
            <person name="Reynolds S."/>
            <person name="Rieger M."/>
            <person name="Rivolta C."/>
            <person name="Rocha E."/>
            <person name="Roche B."/>
            <person name="Rose M."/>
            <person name="Sadaie Y."/>
            <person name="Sato T."/>
            <person name="Scanlan E."/>
            <person name="Schleich S."/>
            <person name="Schroeter R."/>
            <person name="Scoffone F."/>
            <person name="Sekiguchi J."/>
            <person name="Sekowska A."/>
            <person name="Seror S.J."/>
            <person name="Serror P."/>
            <person name="Shin B.-S."/>
            <person name="Soldo B."/>
            <person name="Sorokin A."/>
            <person name="Tacconi E."/>
            <person name="Takagi T."/>
            <person name="Takahashi H."/>
            <person name="Takemaru K."/>
            <person name="Takeuchi M."/>
            <person name="Tamakoshi A."/>
            <person name="Tanaka T."/>
            <person name="Terpstra P."/>
            <person name="Tognoni A."/>
            <person name="Tosato V."/>
            <person name="Uchiyama S."/>
            <person name="Vandenbol M."/>
            <person name="Vannier F."/>
            <person name="Vassarotti A."/>
            <person name="Viari A."/>
            <person name="Wambutt R."/>
            <person name="Wedler E."/>
            <person name="Wedler H."/>
            <person name="Weitzenegger T."/>
            <person name="Winters P."/>
            <person name="Wipat A."/>
            <person name="Yamamoto H."/>
            <person name="Yamane K."/>
            <person name="Yasumoto K."/>
            <person name="Yata K."/>
            <person name="Yoshida K."/>
            <person name="Yoshikawa H.-F."/>
            <person name="Zumstein E."/>
            <person name="Yoshikawa H."/>
            <person name="Danchin A."/>
        </authorList>
    </citation>
    <scope>NUCLEOTIDE SEQUENCE [LARGE SCALE GENOMIC DNA]</scope>
    <source>
        <strain>168</strain>
    </source>
</reference>
<reference key="3">
    <citation type="journal article" date="2007" name="J. Biol. Chem.">
        <title>Organization and function of the YsiA regulon of Bacillus subtilis involved in fatty acid degradation.</title>
        <authorList>
            <person name="Matsuoka H."/>
            <person name="Hirooka K."/>
            <person name="Fujita Y."/>
        </authorList>
    </citation>
    <scope>FUNCTION</scope>
    <scope>SUBUNIT</scope>
    <scope>DNA-BINDING</scope>
    <scope>GENE NAME</scope>
    <source>
        <strain>168</strain>
    </source>
</reference>
<reference key="4">
    <citation type="journal article" date="2005" name="Microbiol. Mol. Biol. Rev.">
        <title>The TetR family of transcriptional repressors.</title>
        <authorList>
            <person name="Ramos J.L."/>
            <person name="Martinez-Bueno M."/>
            <person name="Molina-Henares A.J."/>
            <person name="Teran W."/>
            <person name="Watanabe K."/>
            <person name="Zhang X."/>
            <person name="Gallegos M.T."/>
            <person name="Brennan R."/>
            <person name="Tobes R."/>
        </authorList>
    </citation>
    <scope>REVIEW</scope>
    <scope>GENE FAMILY</scope>
</reference>
<reference key="5">
    <citation type="journal article" date="2005" name="Proteins">
        <title>Structural analysis of a set of proteins resulting from a bacterial genomics project.</title>
        <authorList>
            <person name="Badger J."/>
            <person name="Sauder J.M."/>
            <person name="Adams J.M."/>
            <person name="Antonysamy S."/>
            <person name="Bain K."/>
            <person name="Bergseid M.G."/>
            <person name="Buchanan S.G."/>
            <person name="Buchanan M.D."/>
            <person name="Batiyenko Y."/>
            <person name="Christopher J.A."/>
            <person name="Emtage S."/>
            <person name="Eroshkina A."/>
            <person name="Feil I."/>
            <person name="Furlong E.B."/>
            <person name="Gajiwala K.S."/>
            <person name="Gao X."/>
            <person name="He D."/>
            <person name="Hendle J."/>
            <person name="Huber A."/>
            <person name="Hoda K."/>
            <person name="Kearins P."/>
            <person name="Kissinger C."/>
            <person name="Laubert B."/>
            <person name="Lewis H.A."/>
            <person name="Lin J."/>
            <person name="Loomis K."/>
            <person name="Lorimer D."/>
            <person name="Louie G."/>
            <person name="Maletic M."/>
            <person name="Marsh C.D."/>
            <person name="Miller I."/>
            <person name="Molinari J."/>
            <person name="Muller-Dieckmann H.J."/>
            <person name="Newman J.M."/>
            <person name="Noland B.W."/>
            <person name="Pagarigan B."/>
            <person name="Park F."/>
            <person name="Peat T.S."/>
            <person name="Post K.W."/>
            <person name="Radojicic S."/>
            <person name="Ramos A."/>
            <person name="Romero R."/>
            <person name="Rutter M.E."/>
            <person name="Sanderson W.E."/>
            <person name="Schwinn K.D."/>
            <person name="Tresser J."/>
            <person name="Winhoven J."/>
            <person name="Wright T.A."/>
            <person name="Wu L."/>
            <person name="Xu J."/>
            <person name="Harris T.J.R."/>
        </authorList>
    </citation>
    <scope>X-RAY CRYSTALLOGRAPHY (1.65 ANGSTROMS)</scope>
</reference>
<comment type="function">
    <text evidence="2">Transcriptional regulator in fatty acid degradation. Represses transcription of genes required for fatty acid transport and beta-oxidation, including acdA, fadA, fadB, fadE, fadF, fadG, fadH, fadM, fadN, lcfA and lcfB. Binding of FadR to DNA is specifically inhibited by long chain fatty acyl-CoA compounds of 14-20 carbon atoms in length.</text>
</comment>
<comment type="subunit">
    <text evidence="2">Homodimer. Binds to DNA.</text>
</comment>
<comment type="subcellular location">
    <subcellularLocation>
        <location evidence="3">Cytoplasm</location>
    </subcellularLocation>
</comment>
<feature type="chain" id="PRO_0000360674" description="Fatty acid metabolism regulator protein">
    <location>
        <begin position="1"/>
        <end position="194"/>
    </location>
</feature>
<feature type="domain" description="HTH tetR-type" evidence="1">
    <location>
        <begin position="5"/>
        <end position="65"/>
    </location>
</feature>
<feature type="DNA-binding region" description="H-T-H motif" evidence="1">
    <location>
        <begin position="28"/>
        <end position="47"/>
    </location>
</feature>
<feature type="helix" evidence="4">
    <location>
        <begin position="7"/>
        <end position="22"/>
    </location>
</feature>
<feature type="helix" evidence="4">
    <location>
        <begin position="24"/>
        <end position="26"/>
    </location>
</feature>
<feature type="helix" evidence="4">
    <location>
        <begin position="29"/>
        <end position="36"/>
    </location>
</feature>
<feature type="helix" evidence="4">
    <location>
        <begin position="40"/>
        <end position="46"/>
    </location>
</feature>
<feature type="helix" evidence="4">
    <location>
        <begin position="50"/>
        <end position="73"/>
    </location>
</feature>
<feature type="helix" evidence="4">
    <location>
        <begin position="79"/>
        <end position="95"/>
    </location>
</feature>
<feature type="helix" evidence="4">
    <location>
        <begin position="98"/>
        <end position="105"/>
    </location>
</feature>
<feature type="turn" evidence="4">
    <location>
        <begin position="106"/>
        <end position="108"/>
    </location>
</feature>
<feature type="helix" evidence="4">
    <location>
        <begin position="113"/>
        <end position="139"/>
    </location>
</feature>
<feature type="strand" evidence="5">
    <location>
        <begin position="141"/>
        <end position="143"/>
    </location>
</feature>
<feature type="helix" evidence="4">
    <location>
        <begin position="149"/>
        <end position="169"/>
    </location>
</feature>
<feature type="turn" evidence="4">
    <location>
        <begin position="170"/>
        <end position="172"/>
    </location>
</feature>
<feature type="helix" evidence="4">
    <location>
        <begin position="176"/>
        <end position="179"/>
    </location>
</feature>
<feature type="helix" evidence="4">
    <location>
        <begin position="180"/>
        <end position="189"/>
    </location>
</feature>
<organism>
    <name type="scientific">Bacillus subtilis (strain 168)</name>
    <dbReference type="NCBI Taxonomy" id="224308"/>
    <lineage>
        <taxon>Bacteria</taxon>
        <taxon>Bacillati</taxon>
        <taxon>Bacillota</taxon>
        <taxon>Bacilli</taxon>
        <taxon>Bacillales</taxon>
        <taxon>Bacillaceae</taxon>
        <taxon>Bacillus</taxon>
    </lineage>
</organism>
<accession>P94548</accession>
<accession>Q795X6</accession>
<gene>
    <name type="primary">fadR</name>
    <name type="synonym">ysiA</name>
    <name type="ordered locus">BSU28550</name>
</gene>